<protein>
    <recommendedName>
        <fullName evidence="1">Transcriptional repressor NrdR</fullName>
    </recommendedName>
</protein>
<comment type="function">
    <text evidence="1">Negatively regulates transcription of bacterial ribonucleotide reductase nrd genes and operons by binding to NrdR-boxes.</text>
</comment>
<comment type="cofactor">
    <cofactor evidence="1">
        <name>Zn(2+)</name>
        <dbReference type="ChEBI" id="CHEBI:29105"/>
    </cofactor>
    <text evidence="1">Binds 1 zinc ion.</text>
</comment>
<comment type="similarity">
    <text evidence="1">Belongs to the NrdR family.</text>
</comment>
<name>NRDR_HERAR</name>
<evidence type="ECO:0000255" key="1">
    <source>
        <dbReference type="HAMAP-Rule" id="MF_00440"/>
    </source>
</evidence>
<accession>A4G7M3</accession>
<gene>
    <name evidence="1" type="primary">nrdR</name>
    <name type="ordered locus">HEAR2379</name>
</gene>
<organism>
    <name type="scientific">Herminiimonas arsenicoxydans</name>
    <dbReference type="NCBI Taxonomy" id="204773"/>
    <lineage>
        <taxon>Bacteria</taxon>
        <taxon>Pseudomonadati</taxon>
        <taxon>Pseudomonadota</taxon>
        <taxon>Betaproteobacteria</taxon>
        <taxon>Burkholderiales</taxon>
        <taxon>Oxalobacteraceae</taxon>
        <taxon>Herminiimonas</taxon>
    </lineage>
</organism>
<sequence>MKCPFCQHDDTQVLDTRISEEGDSIRRRRRCVSCDKRFTTYERIELAMPVIVKKNGSRTDFDPKKLQASLQLALRKRPVSAEAVDAAIHRIEQKLLSSGEREVVSGQIGELVMRELQRLDKIAYIRFASVYKSFEDVAEFQDAIAEVGRERKPPSK</sequence>
<reference key="1">
    <citation type="journal article" date="2007" name="PLoS Genet.">
        <title>A tale of two oxidation states: bacterial colonization of arsenic-rich environments.</title>
        <authorList>
            <person name="Muller D."/>
            <person name="Medigue C."/>
            <person name="Koechler S."/>
            <person name="Barbe V."/>
            <person name="Barakat M."/>
            <person name="Talla E."/>
            <person name="Bonnefoy V."/>
            <person name="Krin E."/>
            <person name="Arsene-Ploetze F."/>
            <person name="Carapito C."/>
            <person name="Chandler M."/>
            <person name="Cournoyer B."/>
            <person name="Cruveiller S."/>
            <person name="Dossat C."/>
            <person name="Duval S."/>
            <person name="Heymann M."/>
            <person name="Leize E."/>
            <person name="Lieutaud A."/>
            <person name="Lievremont D."/>
            <person name="Makita Y."/>
            <person name="Mangenot S."/>
            <person name="Nitschke W."/>
            <person name="Ortet P."/>
            <person name="Perdrial N."/>
            <person name="Schoepp B."/>
            <person name="Siguier P."/>
            <person name="Simeonova D.D."/>
            <person name="Rouy Z."/>
            <person name="Segurens B."/>
            <person name="Turlin E."/>
            <person name="Vallenet D."/>
            <person name="van Dorsselaer A."/>
            <person name="Weiss S."/>
            <person name="Weissenbach J."/>
            <person name="Lett M.-C."/>
            <person name="Danchin A."/>
            <person name="Bertin P.N."/>
        </authorList>
    </citation>
    <scope>NUCLEOTIDE SEQUENCE [LARGE SCALE GENOMIC DNA]</scope>
    <source>
        <strain>ULPAs1</strain>
    </source>
</reference>
<proteinExistence type="inferred from homology"/>
<keyword id="KW-0067">ATP-binding</keyword>
<keyword id="KW-0238">DNA-binding</keyword>
<keyword id="KW-0479">Metal-binding</keyword>
<keyword id="KW-0547">Nucleotide-binding</keyword>
<keyword id="KW-1185">Reference proteome</keyword>
<keyword id="KW-0678">Repressor</keyword>
<keyword id="KW-0804">Transcription</keyword>
<keyword id="KW-0805">Transcription regulation</keyword>
<keyword id="KW-0862">Zinc</keyword>
<keyword id="KW-0863">Zinc-finger</keyword>
<feature type="chain" id="PRO_1000080758" description="Transcriptional repressor NrdR">
    <location>
        <begin position="1"/>
        <end position="156"/>
    </location>
</feature>
<feature type="domain" description="ATP-cone" evidence="1">
    <location>
        <begin position="49"/>
        <end position="139"/>
    </location>
</feature>
<feature type="zinc finger region" evidence="1">
    <location>
        <begin position="3"/>
        <end position="34"/>
    </location>
</feature>
<dbReference type="EMBL" id="CU207211">
    <property type="protein sequence ID" value="CAL62510.1"/>
    <property type="molecule type" value="Genomic_DNA"/>
</dbReference>
<dbReference type="SMR" id="A4G7M3"/>
<dbReference type="STRING" id="204773.HEAR2379"/>
<dbReference type="KEGG" id="har:HEAR2379"/>
<dbReference type="eggNOG" id="COG1327">
    <property type="taxonomic scope" value="Bacteria"/>
</dbReference>
<dbReference type="HOGENOM" id="CLU_108412_0_0_4"/>
<dbReference type="OrthoDB" id="9807461at2"/>
<dbReference type="Proteomes" id="UP000006697">
    <property type="component" value="Chromosome"/>
</dbReference>
<dbReference type="GO" id="GO:0005524">
    <property type="term" value="F:ATP binding"/>
    <property type="evidence" value="ECO:0007669"/>
    <property type="project" value="UniProtKB-KW"/>
</dbReference>
<dbReference type="GO" id="GO:0003677">
    <property type="term" value="F:DNA binding"/>
    <property type="evidence" value="ECO:0007669"/>
    <property type="project" value="UniProtKB-KW"/>
</dbReference>
<dbReference type="GO" id="GO:0008270">
    <property type="term" value="F:zinc ion binding"/>
    <property type="evidence" value="ECO:0007669"/>
    <property type="project" value="UniProtKB-UniRule"/>
</dbReference>
<dbReference type="GO" id="GO:0045892">
    <property type="term" value="P:negative regulation of DNA-templated transcription"/>
    <property type="evidence" value="ECO:0007669"/>
    <property type="project" value="UniProtKB-UniRule"/>
</dbReference>
<dbReference type="HAMAP" id="MF_00440">
    <property type="entry name" value="NrdR"/>
    <property type="match status" value="1"/>
</dbReference>
<dbReference type="InterPro" id="IPR005144">
    <property type="entry name" value="ATP-cone_dom"/>
</dbReference>
<dbReference type="InterPro" id="IPR055173">
    <property type="entry name" value="NrdR-like_N"/>
</dbReference>
<dbReference type="InterPro" id="IPR003796">
    <property type="entry name" value="RNR_NrdR-like"/>
</dbReference>
<dbReference type="NCBIfam" id="TIGR00244">
    <property type="entry name" value="transcriptional regulator NrdR"/>
    <property type="match status" value="1"/>
</dbReference>
<dbReference type="PANTHER" id="PTHR30455">
    <property type="entry name" value="TRANSCRIPTIONAL REPRESSOR NRDR"/>
    <property type="match status" value="1"/>
</dbReference>
<dbReference type="PANTHER" id="PTHR30455:SF2">
    <property type="entry name" value="TRANSCRIPTIONAL REPRESSOR NRDR"/>
    <property type="match status" value="1"/>
</dbReference>
<dbReference type="Pfam" id="PF03477">
    <property type="entry name" value="ATP-cone"/>
    <property type="match status" value="1"/>
</dbReference>
<dbReference type="Pfam" id="PF22811">
    <property type="entry name" value="Zn_ribbon_NrdR"/>
    <property type="match status" value="1"/>
</dbReference>
<dbReference type="PROSITE" id="PS51161">
    <property type="entry name" value="ATP_CONE"/>
    <property type="match status" value="1"/>
</dbReference>